<proteinExistence type="inferred from homology"/>
<dbReference type="EC" id="2.8.1.6" evidence="1"/>
<dbReference type="EMBL" id="CP000806">
    <property type="protein sequence ID" value="ACB53698.1"/>
    <property type="status" value="ALT_INIT"/>
    <property type="molecule type" value="Genomic_DNA"/>
</dbReference>
<dbReference type="SMR" id="B1WTI3"/>
<dbReference type="STRING" id="43989.cce_4350"/>
<dbReference type="KEGG" id="cyt:cce_4350"/>
<dbReference type="eggNOG" id="COG0502">
    <property type="taxonomic scope" value="Bacteria"/>
</dbReference>
<dbReference type="HOGENOM" id="CLU_033172_2_1_3"/>
<dbReference type="UniPathway" id="UPA00078">
    <property type="reaction ID" value="UER00162"/>
</dbReference>
<dbReference type="Proteomes" id="UP000001203">
    <property type="component" value="Chromosome circular"/>
</dbReference>
<dbReference type="GO" id="GO:0051537">
    <property type="term" value="F:2 iron, 2 sulfur cluster binding"/>
    <property type="evidence" value="ECO:0007669"/>
    <property type="project" value="UniProtKB-KW"/>
</dbReference>
<dbReference type="GO" id="GO:0051539">
    <property type="term" value="F:4 iron, 4 sulfur cluster binding"/>
    <property type="evidence" value="ECO:0007669"/>
    <property type="project" value="UniProtKB-KW"/>
</dbReference>
<dbReference type="GO" id="GO:0004076">
    <property type="term" value="F:biotin synthase activity"/>
    <property type="evidence" value="ECO:0007669"/>
    <property type="project" value="UniProtKB-UniRule"/>
</dbReference>
<dbReference type="GO" id="GO:0005506">
    <property type="term" value="F:iron ion binding"/>
    <property type="evidence" value="ECO:0007669"/>
    <property type="project" value="UniProtKB-UniRule"/>
</dbReference>
<dbReference type="GO" id="GO:0009102">
    <property type="term" value="P:biotin biosynthetic process"/>
    <property type="evidence" value="ECO:0007669"/>
    <property type="project" value="UniProtKB-UniRule"/>
</dbReference>
<dbReference type="CDD" id="cd01335">
    <property type="entry name" value="Radical_SAM"/>
    <property type="match status" value="1"/>
</dbReference>
<dbReference type="FunFam" id="3.20.20.70:FF:000026">
    <property type="entry name" value="Biotin synthase"/>
    <property type="match status" value="1"/>
</dbReference>
<dbReference type="Gene3D" id="3.20.20.70">
    <property type="entry name" value="Aldolase class I"/>
    <property type="match status" value="1"/>
</dbReference>
<dbReference type="HAMAP" id="MF_01694">
    <property type="entry name" value="BioB"/>
    <property type="match status" value="1"/>
</dbReference>
<dbReference type="InterPro" id="IPR013785">
    <property type="entry name" value="Aldolase_TIM"/>
</dbReference>
<dbReference type="InterPro" id="IPR010722">
    <property type="entry name" value="BATS_dom"/>
</dbReference>
<dbReference type="InterPro" id="IPR002684">
    <property type="entry name" value="Biotin_synth/BioAB"/>
</dbReference>
<dbReference type="InterPro" id="IPR024177">
    <property type="entry name" value="Biotin_synthase"/>
</dbReference>
<dbReference type="InterPro" id="IPR006638">
    <property type="entry name" value="Elp3/MiaA/NifB-like_rSAM"/>
</dbReference>
<dbReference type="InterPro" id="IPR007197">
    <property type="entry name" value="rSAM"/>
</dbReference>
<dbReference type="NCBIfam" id="TIGR00433">
    <property type="entry name" value="bioB"/>
    <property type="match status" value="1"/>
</dbReference>
<dbReference type="PANTHER" id="PTHR22976">
    <property type="entry name" value="BIOTIN SYNTHASE"/>
    <property type="match status" value="1"/>
</dbReference>
<dbReference type="PANTHER" id="PTHR22976:SF2">
    <property type="entry name" value="BIOTIN SYNTHASE, MITOCHONDRIAL"/>
    <property type="match status" value="1"/>
</dbReference>
<dbReference type="Pfam" id="PF06968">
    <property type="entry name" value="BATS"/>
    <property type="match status" value="1"/>
</dbReference>
<dbReference type="Pfam" id="PF04055">
    <property type="entry name" value="Radical_SAM"/>
    <property type="match status" value="1"/>
</dbReference>
<dbReference type="PIRSF" id="PIRSF001619">
    <property type="entry name" value="Biotin_synth"/>
    <property type="match status" value="1"/>
</dbReference>
<dbReference type="SFLD" id="SFLDG01060">
    <property type="entry name" value="BATS_domain_containing"/>
    <property type="match status" value="1"/>
</dbReference>
<dbReference type="SFLD" id="SFLDG01278">
    <property type="entry name" value="biotin_synthase_like"/>
    <property type="match status" value="1"/>
</dbReference>
<dbReference type="SMART" id="SM00876">
    <property type="entry name" value="BATS"/>
    <property type="match status" value="1"/>
</dbReference>
<dbReference type="SMART" id="SM00729">
    <property type="entry name" value="Elp3"/>
    <property type="match status" value="1"/>
</dbReference>
<dbReference type="SUPFAM" id="SSF102114">
    <property type="entry name" value="Radical SAM enzymes"/>
    <property type="match status" value="1"/>
</dbReference>
<dbReference type="PROSITE" id="PS51918">
    <property type="entry name" value="RADICAL_SAM"/>
    <property type="match status" value="1"/>
</dbReference>
<sequence>MIQFIRPKTASGKTIVVQLSASPPQTPPPTDTNALKNWLEILSQRIINGDRLTKTEALTLTQIDGQDNILLLCEAADRIRQACCGNVVDLCSIINVKSGNCSENCQFCSQSVHHQGENSPIYGLKSSEEILAQAKAAEVAGAKRFCLVSQGRGPKYNSPQSGEFEKILETVRQITTETNIKPCCALGEVTLEQAEALKEAGVTRYNHNLEASENYYQSIVSTHSWGDRVETVKNLKKAGIQACTGGIMGMGETWEDRVDLAISLRELEVDSVPINLLNPREGTPLGHLPKLDVFDALKAIAIFRFLLPEQILRYAGGREAVMGELQSLGLKSGINAMLIGHYLTTLGQPPENDHAMLESLGLQGGEAPIPGEYKKKTQKKAH</sequence>
<reference key="1">
    <citation type="journal article" date="2008" name="Proc. Natl. Acad. Sci. U.S.A.">
        <title>The genome of Cyanothece 51142, a unicellular diazotrophic cyanobacterium important in the marine nitrogen cycle.</title>
        <authorList>
            <person name="Welsh E.A."/>
            <person name="Liberton M."/>
            <person name="Stoeckel J."/>
            <person name="Loh T."/>
            <person name="Elvitigala T."/>
            <person name="Wang C."/>
            <person name="Wollam A."/>
            <person name="Fulton R.S."/>
            <person name="Clifton S.W."/>
            <person name="Jacobs J.M."/>
            <person name="Aurora R."/>
            <person name="Ghosh B.K."/>
            <person name="Sherman L.A."/>
            <person name="Smith R.D."/>
            <person name="Wilson R.K."/>
            <person name="Pakrasi H.B."/>
        </authorList>
    </citation>
    <scope>NUCLEOTIDE SEQUENCE [LARGE SCALE GENOMIC DNA]</scope>
    <source>
        <strain>ATCC 51142 / BH68</strain>
    </source>
</reference>
<organism>
    <name type="scientific">Crocosphaera subtropica (strain ATCC 51142 / BH68)</name>
    <name type="common">Cyanothece sp. (strain ATCC 51142)</name>
    <dbReference type="NCBI Taxonomy" id="43989"/>
    <lineage>
        <taxon>Bacteria</taxon>
        <taxon>Bacillati</taxon>
        <taxon>Cyanobacteriota</taxon>
        <taxon>Cyanophyceae</taxon>
        <taxon>Oscillatoriophycideae</taxon>
        <taxon>Chroococcales</taxon>
        <taxon>Aphanothecaceae</taxon>
        <taxon>Crocosphaera</taxon>
        <taxon>Crocosphaera subtropica</taxon>
    </lineage>
</organism>
<evidence type="ECO:0000255" key="1">
    <source>
        <dbReference type="HAMAP-Rule" id="MF_01694"/>
    </source>
</evidence>
<evidence type="ECO:0000255" key="2">
    <source>
        <dbReference type="PROSITE-ProRule" id="PRU01266"/>
    </source>
</evidence>
<evidence type="ECO:0000305" key="3"/>
<accession>B1WTI3</accession>
<comment type="function">
    <text evidence="1">Catalyzes the conversion of dethiobiotin (DTB) to biotin by the insertion of a sulfur atom into dethiobiotin via a radical-based mechanism.</text>
</comment>
<comment type="catalytic activity">
    <reaction evidence="1">
        <text>(4R,5S)-dethiobiotin + (sulfur carrier)-SH + 2 reduced [2Fe-2S]-[ferredoxin] + 2 S-adenosyl-L-methionine = (sulfur carrier)-H + biotin + 2 5'-deoxyadenosine + 2 L-methionine + 2 oxidized [2Fe-2S]-[ferredoxin]</text>
        <dbReference type="Rhea" id="RHEA:22060"/>
        <dbReference type="Rhea" id="RHEA-COMP:10000"/>
        <dbReference type="Rhea" id="RHEA-COMP:10001"/>
        <dbReference type="Rhea" id="RHEA-COMP:14737"/>
        <dbReference type="Rhea" id="RHEA-COMP:14739"/>
        <dbReference type="ChEBI" id="CHEBI:17319"/>
        <dbReference type="ChEBI" id="CHEBI:29917"/>
        <dbReference type="ChEBI" id="CHEBI:33737"/>
        <dbReference type="ChEBI" id="CHEBI:33738"/>
        <dbReference type="ChEBI" id="CHEBI:57586"/>
        <dbReference type="ChEBI" id="CHEBI:57844"/>
        <dbReference type="ChEBI" id="CHEBI:59789"/>
        <dbReference type="ChEBI" id="CHEBI:64428"/>
        <dbReference type="ChEBI" id="CHEBI:149473"/>
        <dbReference type="EC" id="2.8.1.6"/>
    </reaction>
</comment>
<comment type="cofactor">
    <cofactor evidence="1">
        <name>[4Fe-4S] cluster</name>
        <dbReference type="ChEBI" id="CHEBI:49883"/>
    </cofactor>
    <text evidence="1">Binds 1 [4Fe-4S] cluster. The cluster is coordinated with 3 cysteines and an exchangeable S-adenosyl-L-methionine.</text>
</comment>
<comment type="cofactor">
    <cofactor evidence="1">
        <name>[2Fe-2S] cluster</name>
        <dbReference type="ChEBI" id="CHEBI:190135"/>
    </cofactor>
    <text evidence="1">Binds 1 [2Fe-2S] cluster. The cluster is coordinated with 3 cysteines and 1 arginine.</text>
</comment>
<comment type="pathway">
    <text evidence="1">Cofactor biosynthesis; biotin biosynthesis; biotin from 7,8-diaminononanoate: step 2/2.</text>
</comment>
<comment type="subunit">
    <text evidence="1">Homodimer.</text>
</comment>
<comment type="similarity">
    <text evidence="1">Belongs to the radical SAM superfamily. Biotin synthase family.</text>
</comment>
<comment type="sequence caution" evidence="3">
    <conflict type="erroneous initiation">
        <sequence resource="EMBL-CDS" id="ACB53698"/>
    </conflict>
</comment>
<keyword id="KW-0001">2Fe-2S</keyword>
<keyword id="KW-0004">4Fe-4S</keyword>
<keyword id="KW-0093">Biotin biosynthesis</keyword>
<keyword id="KW-0408">Iron</keyword>
<keyword id="KW-0411">Iron-sulfur</keyword>
<keyword id="KW-0479">Metal-binding</keyword>
<keyword id="KW-1185">Reference proteome</keyword>
<keyword id="KW-0949">S-adenosyl-L-methionine</keyword>
<keyword id="KW-0808">Transferase</keyword>
<feature type="chain" id="PRO_0000381337" description="Biotin synthase">
    <location>
        <begin position="1"/>
        <end position="382"/>
    </location>
</feature>
<feature type="domain" description="Radical SAM core" evidence="2">
    <location>
        <begin position="83"/>
        <end position="318"/>
    </location>
</feature>
<feature type="binding site" evidence="1">
    <location>
        <position position="101"/>
    </location>
    <ligand>
        <name>[4Fe-4S] cluster</name>
        <dbReference type="ChEBI" id="CHEBI:49883"/>
        <note>4Fe-4S-S-AdoMet</note>
    </ligand>
</feature>
<feature type="binding site" evidence="1">
    <location>
        <position position="105"/>
    </location>
    <ligand>
        <name>[4Fe-4S] cluster</name>
        <dbReference type="ChEBI" id="CHEBI:49883"/>
        <note>4Fe-4S-S-AdoMet</note>
    </ligand>
</feature>
<feature type="binding site" evidence="1">
    <location>
        <position position="108"/>
    </location>
    <ligand>
        <name>[4Fe-4S] cluster</name>
        <dbReference type="ChEBI" id="CHEBI:49883"/>
        <note>4Fe-4S-S-AdoMet</note>
    </ligand>
</feature>
<feature type="binding site" evidence="1">
    <location>
        <position position="146"/>
    </location>
    <ligand>
        <name>[2Fe-2S] cluster</name>
        <dbReference type="ChEBI" id="CHEBI:190135"/>
    </ligand>
</feature>
<feature type="binding site" evidence="1">
    <location>
        <position position="183"/>
    </location>
    <ligand>
        <name>[2Fe-2S] cluster</name>
        <dbReference type="ChEBI" id="CHEBI:190135"/>
    </ligand>
</feature>
<feature type="binding site" evidence="1">
    <location>
        <position position="243"/>
    </location>
    <ligand>
        <name>[2Fe-2S] cluster</name>
        <dbReference type="ChEBI" id="CHEBI:190135"/>
    </ligand>
</feature>
<feature type="binding site" evidence="1">
    <location>
        <position position="313"/>
    </location>
    <ligand>
        <name>[2Fe-2S] cluster</name>
        <dbReference type="ChEBI" id="CHEBI:190135"/>
    </ligand>
</feature>
<name>BIOB_CROS5</name>
<gene>
    <name evidence="1" type="primary">bioB</name>
    <name type="ordered locus">cce_4350</name>
</gene>
<protein>
    <recommendedName>
        <fullName evidence="1">Biotin synthase</fullName>
        <ecNumber evidence="1">2.8.1.6</ecNumber>
    </recommendedName>
</protein>